<evidence type="ECO:0000255" key="1">
    <source>
        <dbReference type="HAMAP-Rule" id="MF_00113"/>
    </source>
</evidence>
<comment type="function">
    <text evidence="1">Transfers and isomerizes the ribose moiety from AdoMet to the 7-aminomethyl group of 7-deazaguanine (preQ1-tRNA) to give epoxyqueuosine (oQ-tRNA).</text>
</comment>
<comment type="catalytic activity">
    <reaction evidence="1">
        <text>7-aminomethyl-7-carbaguanosine(34) in tRNA + S-adenosyl-L-methionine = epoxyqueuosine(34) in tRNA + adenine + L-methionine + 2 H(+)</text>
        <dbReference type="Rhea" id="RHEA:32155"/>
        <dbReference type="Rhea" id="RHEA-COMP:10342"/>
        <dbReference type="Rhea" id="RHEA-COMP:18582"/>
        <dbReference type="ChEBI" id="CHEBI:15378"/>
        <dbReference type="ChEBI" id="CHEBI:16708"/>
        <dbReference type="ChEBI" id="CHEBI:57844"/>
        <dbReference type="ChEBI" id="CHEBI:59789"/>
        <dbReference type="ChEBI" id="CHEBI:82833"/>
        <dbReference type="ChEBI" id="CHEBI:194443"/>
        <dbReference type="EC" id="2.4.99.17"/>
    </reaction>
</comment>
<comment type="pathway">
    <text evidence="1">tRNA modification; tRNA-queuosine biosynthesis.</text>
</comment>
<comment type="subunit">
    <text evidence="1">Monomer.</text>
</comment>
<comment type="subcellular location">
    <subcellularLocation>
        <location evidence="1">Cytoplasm</location>
    </subcellularLocation>
</comment>
<comment type="similarity">
    <text evidence="1">Belongs to the QueA family.</text>
</comment>
<protein>
    <recommendedName>
        <fullName evidence="1">S-adenosylmethionine:tRNA ribosyltransferase-isomerase</fullName>
        <ecNumber evidence="1">2.4.99.17</ecNumber>
    </recommendedName>
    <alternativeName>
        <fullName evidence="1">Queuosine biosynthesis protein QueA</fullName>
    </alternativeName>
</protein>
<accession>C1ESW2</accession>
<dbReference type="EC" id="2.4.99.17" evidence="1"/>
<dbReference type="EMBL" id="CP001407">
    <property type="protein sequence ID" value="ACO27268.1"/>
    <property type="molecule type" value="Genomic_DNA"/>
</dbReference>
<dbReference type="RefSeq" id="WP_000354029.1">
    <property type="nucleotide sequence ID" value="NZ_CP009318.1"/>
</dbReference>
<dbReference type="SMR" id="C1ESW2"/>
<dbReference type="KEGG" id="bcx:BCA_4529"/>
<dbReference type="PATRIC" id="fig|572264.18.peg.4478"/>
<dbReference type="UniPathway" id="UPA00392"/>
<dbReference type="Proteomes" id="UP000002210">
    <property type="component" value="Chromosome"/>
</dbReference>
<dbReference type="GO" id="GO:0005737">
    <property type="term" value="C:cytoplasm"/>
    <property type="evidence" value="ECO:0007669"/>
    <property type="project" value="UniProtKB-SubCell"/>
</dbReference>
<dbReference type="GO" id="GO:0051075">
    <property type="term" value="F:S-adenosylmethionine:tRNA ribosyltransferase-isomerase activity"/>
    <property type="evidence" value="ECO:0007669"/>
    <property type="project" value="UniProtKB-EC"/>
</dbReference>
<dbReference type="GO" id="GO:0008616">
    <property type="term" value="P:queuosine biosynthetic process"/>
    <property type="evidence" value="ECO:0007669"/>
    <property type="project" value="UniProtKB-UniRule"/>
</dbReference>
<dbReference type="GO" id="GO:0002099">
    <property type="term" value="P:tRNA wobble guanine modification"/>
    <property type="evidence" value="ECO:0007669"/>
    <property type="project" value="TreeGrafter"/>
</dbReference>
<dbReference type="FunFam" id="2.40.10.240:FF:000002">
    <property type="entry name" value="S-adenosylmethionine:tRNA ribosyltransferase-isomerase"/>
    <property type="match status" value="1"/>
</dbReference>
<dbReference type="FunFam" id="3.40.1780.10:FF:000001">
    <property type="entry name" value="S-adenosylmethionine:tRNA ribosyltransferase-isomerase"/>
    <property type="match status" value="1"/>
</dbReference>
<dbReference type="Gene3D" id="2.40.10.240">
    <property type="entry name" value="QueA-like"/>
    <property type="match status" value="1"/>
</dbReference>
<dbReference type="Gene3D" id="3.40.1780.10">
    <property type="entry name" value="QueA-like"/>
    <property type="match status" value="1"/>
</dbReference>
<dbReference type="HAMAP" id="MF_00113">
    <property type="entry name" value="QueA"/>
    <property type="match status" value="1"/>
</dbReference>
<dbReference type="InterPro" id="IPR003699">
    <property type="entry name" value="QueA"/>
</dbReference>
<dbReference type="InterPro" id="IPR042118">
    <property type="entry name" value="QueA_dom1"/>
</dbReference>
<dbReference type="InterPro" id="IPR042119">
    <property type="entry name" value="QueA_dom2"/>
</dbReference>
<dbReference type="InterPro" id="IPR036100">
    <property type="entry name" value="QueA_sf"/>
</dbReference>
<dbReference type="NCBIfam" id="NF001140">
    <property type="entry name" value="PRK00147.1"/>
    <property type="match status" value="1"/>
</dbReference>
<dbReference type="NCBIfam" id="TIGR00113">
    <property type="entry name" value="queA"/>
    <property type="match status" value="1"/>
</dbReference>
<dbReference type="PANTHER" id="PTHR30307">
    <property type="entry name" value="S-ADENOSYLMETHIONINE:TRNA RIBOSYLTRANSFERASE-ISOMERASE"/>
    <property type="match status" value="1"/>
</dbReference>
<dbReference type="PANTHER" id="PTHR30307:SF0">
    <property type="entry name" value="S-ADENOSYLMETHIONINE:TRNA RIBOSYLTRANSFERASE-ISOMERASE"/>
    <property type="match status" value="1"/>
</dbReference>
<dbReference type="Pfam" id="PF02547">
    <property type="entry name" value="Queuosine_synth"/>
    <property type="match status" value="1"/>
</dbReference>
<dbReference type="SUPFAM" id="SSF111337">
    <property type="entry name" value="QueA-like"/>
    <property type="match status" value="1"/>
</dbReference>
<sequence>MDINLFDFHLPEELIAQVPLEERETSRLMVLDRETGDIEHKHFTDILSYLHEGDCLVLNETKVMPARLHGVKEDTGAHIEVLLLKQEEGDKWETLVKPAKRVKEGTVISFGEGKLKATCTGTADQGGRQLEFSYDGIFYEILDELGEMPLPPYIKETLEDRDRYQTVYAKEIGSAAAPTAGLHFTEELLEKLKQKGVELAFITLHVGLGTFRPVSADTIEEHHMHAEYYHMSEETAALLNRVKENGGRIITVGTTSTRTLETIATDHNGKLCAASGWTDIFMYPGYEFKAIDGLITNFHLPKSTLIMLVSAFANRDNVLHAYNEAVKEKYRFFSFGDAMFIASHAKMGNK</sequence>
<reference key="1">
    <citation type="submission" date="2009-02" db="EMBL/GenBank/DDBJ databases">
        <title>Genome sequence of Bacillus cereus 03BB102.</title>
        <authorList>
            <person name="Dodson R.J."/>
            <person name="Jackson P."/>
            <person name="Munk A.C."/>
            <person name="Brettin T."/>
            <person name="Bruce D."/>
            <person name="Detter C."/>
            <person name="Tapia R."/>
            <person name="Han C."/>
            <person name="Sutton G."/>
            <person name="Sims D."/>
        </authorList>
    </citation>
    <scope>NUCLEOTIDE SEQUENCE [LARGE SCALE GENOMIC DNA]</scope>
    <source>
        <strain>03BB102</strain>
    </source>
</reference>
<keyword id="KW-0963">Cytoplasm</keyword>
<keyword id="KW-0671">Queuosine biosynthesis</keyword>
<keyword id="KW-0949">S-adenosyl-L-methionine</keyword>
<keyword id="KW-0808">Transferase</keyword>
<proteinExistence type="inferred from homology"/>
<name>QUEA_BACC3</name>
<gene>
    <name evidence="1" type="primary">queA</name>
    <name type="ordered locus">BCA_4529</name>
</gene>
<organism>
    <name type="scientific">Bacillus cereus (strain 03BB102)</name>
    <dbReference type="NCBI Taxonomy" id="572264"/>
    <lineage>
        <taxon>Bacteria</taxon>
        <taxon>Bacillati</taxon>
        <taxon>Bacillota</taxon>
        <taxon>Bacilli</taxon>
        <taxon>Bacillales</taxon>
        <taxon>Bacillaceae</taxon>
        <taxon>Bacillus</taxon>
        <taxon>Bacillus cereus group</taxon>
    </lineage>
</organism>
<feature type="chain" id="PRO_1000119141" description="S-adenosylmethionine:tRNA ribosyltransferase-isomerase">
    <location>
        <begin position="1"/>
        <end position="350"/>
    </location>
</feature>